<protein>
    <recommendedName>
        <fullName evidence="2">Formamidopyrimidine-DNA glycosylase</fullName>
        <shortName evidence="2">Fapy-DNA glycosylase</shortName>
        <ecNumber evidence="2">3.2.2.23</ecNumber>
    </recommendedName>
    <alternativeName>
        <fullName evidence="2">DNA-(apurinic or apyrimidinic site) lyase MutM</fullName>
        <shortName evidence="2">AP lyase MutM</shortName>
        <ecNumber evidence="2">4.2.99.18</ecNumber>
    </alternativeName>
</protein>
<feature type="initiator methionine" description="Removed" evidence="1">
    <location>
        <position position="1"/>
    </location>
</feature>
<feature type="chain" id="PRO_1000008667" description="Formamidopyrimidine-DNA glycosylase">
    <location>
        <begin position="2"/>
        <end position="275"/>
    </location>
</feature>
<feature type="zinc finger region" description="FPG-type; degenerate" evidence="2">
    <location>
        <begin position="236"/>
        <end position="275"/>
    </location>
</feature>
<feature type="active site" description="Schiff-base intermediate with DNA" evidence="2">
    <location>
        <position position="2"/>
    </location>
</feature>
<feature type="active site" description="Proton donor" evidence="2">
    <location>
        <position position="3"/>
    </location>
</feature>
<feature type="active site" description="Proton donor; for beta-elimination activity" evidence="2">
    <location>
        <position position="58"/>
    </location>
</feature>
<feature type="active site" description="Proton donor; for delta-elimination activity" evidence="2">
    <location>
        <position position="265"/>
    </location>
</feature>
<feature type="binding site" evidence="2">
    <location>
        <position position="89"/>
    </location>
    <ligand>
        <name>DNA</name>
        <dbReference type="ChEBI" id="CHEBI:16991"/>
    </ligand>
</feature>
<feature type="binding site" evidence="2">
    <location>
        <position position="108"/>
    </location>
    <ligand>
        <name>DNA</name>
        <dbReference type="ChEBI" id="CHEBI:16991"/>
    </ligand>
</feature>
<feature type="binding site" evidence="2">
    <location>
        <position position="151"/>
    </location>
    <ligand>
        <name>DNA</name>
        <dbReference type="ChEBI" id="CHEBI:16991"/>
    </ligand>
</feature>
<organism>
    <name type="scientific">Acidiphilium cryptum (strain JF-5)</name>
    <dbReference type="NCBI Taxonomy" id="349163"/>
    <lineage>
        <taxon>Bacteria</taxon>
        <taxon>Pseudomonadati</taxon>
        <taxon>Pseudomonadota</taxon>
        <taxon>Alphaproteobacteria</taxon>
        <taxon>Acetobacterales</taxon>
        <taxon>Acidocellaceae</taxon>
        <taxon>Acidiphilium</taxon>
    </lineage>
</organism>
<dbReference type="EC" id="3.2.2.23" evidence="2"/>
<dbReference type="EC" id="4.2.99.18" evidence="2"/>
<dbReference type="EMBL" id="CP000697">
    <property type="protein sequence ID" value="ABQ30927.1"/>
    <property type="molecule type" value="Genomic_DNA"/>
</dbReference>
<dbReference type="RefSeq" id="WP_011942443.1">
    <property type="nucleotide sequence ID" value="NC_009484.1"/>
</dbReference>
<dbReference type="SMR" id="A5FZ95"/>
<dbReference type="STRING" id="349163.Acry_1723"/>
<dbReference type="KEGG" id="acr:Acry_1723"/>
<dbReference type="eggNOG" id="COG0266">
    <property type="taxonomic scope" value="Bacteria"/>
</dbReference>
<dbReference type="HOGENOM" id="CLU_038423_1_1_5"/>
<dbReference type="Proteomes" id="UP000000245">
    <property type="component" value="Chromosome"/>
</dbReference>
<dbReference type="GO" id="GO:0034039">
    <property type="term" value="F:8-oxo-7,8-dihydroguanine DNA N-glycosylase activity"/>
    <property type="evidence" value="ECO:0007669"/>
    <property type="project" value="TreeGrafter"/>
</dbReference>
<dbReference type="GO" id="GO:0140078">
    <property type="term" value="F:class I DNA-(apurinic or apyrimidinic site) endonuclease activity"/>
    <property type="evidence" value="ECO:0007669"/>
    <property type="project" value="UniProtKB-EC"/>
</dbReference>
<dbReference type="GO" id="GO:0003684">
    <property type="term" value="F:damaged DNA binding"/>
    <property type="evidence" value="ECO:0007669"/>
    <property type="project" value="InterPro"/>
</dbReference>
<dbReference type="GO" id="GO:0008270">
    <property type="term" value="F:zinc ion binding"/>
    <property type="evidence" value="ECO:0007669"/>
    <property type="project" value="UniProtKB-UniRule"/>
</dbReference>
<dbReference type="GO" id="GO:0006284">
    <property type="term" value="P:base-excision repair"/>
    <property type="evidence" value="ECO:0007669"/>
    <property type="project" value="InterPro"/>
</dbReference>
<dbReference type="CDD" id="cd08966">
    <property type="entry name" value="EcFpg-like_N"/>
    <property type="match status" value="1"/>
</dbReference>
<dbReference type="FunFam" id="1.10.8.50:FF:000003">
    <property type="entry name" value="Formamidopyrimidine-DNA glycosylase"/>
    <property type="match status" value="1"/>
</dbReference>
<dbReference type="Gene3D" id="1.10.8.50">
    <property type="match status" value="1"/>
</dbReference>
<dbReference type="Gene3D" id="3.20.190.10">
    <property type="entry name" value="MutM-like, N-terminal"/>
    <property type="match status" value="1"/>
</dbReference>
<dbReference type="HAMAP" id="MF_00103">
    <property type="entry name" value="Fapy_DNA_glycosyl"/>
    <property type="match status" value="1"/>
</dbReference>
<dbReference type="InterPro" id="IPR015886">
    <property type="entry name" value="DNA_glyclase/AP_lyase_DNA-bd"/>
</dbReference>
<dbReference type="InterPro" id="IPR020629">
    <property type="entry name" value="Formamido-pyr_DNA_Glyclase"/>
</dbReference>
<dbReference type="InterPro" id="IPR012319">
    <property type="entry name" value="FPG_cat"/>
</dbReference>
<dbReference type="InterPro" id="IPR035937">
    <property type="entry name" value="MutM-like_N-ter"/>
</dbReference>
<dbReference type="InterPro" id="IPR010979">
    <property type="entry name" value="Ribosomal_uS13-like_H2TH"/>
</dbReference>
<dbReference type="InterPro" id="IPR000214">
    <property type="entry name" value="Znf_DNA_glyclase/AP_lyase"/>
</dbReference>
<dbReference type="NCBIfam" id="TIGR00577">
    <property type="entry name" value="fpg"/>
    <property type="match status" value="1"/>
</dbReference>
<dbReference type="NCBIfam" id="NF002211">
    <property type="entry name" value="PRK01103.1"/>
    <property type="match status" value="1"/>
</dbReference>
<dbReference type="PANTHER" id="PTHR22993">
    <property type="entry name" value="FORMAMIDOPYRIMIDINE-DNA GLYCOSYLASE"/>
    <property type="match status" value="1"/>
</dbReference>
<dbReference type="PANTHER" id="PTHR22993:SF9">
    <property type="entry name" value="FORMAMIDOPYRIMIDINE-DNA GLYCOSYLASE"/>
    <property type="match status" value="1"/>
</dbReference>
<dbReference type="Pfam" id="PF01149">
    <property type="entry name" value="Fapy_DNA_glyco"/>
    <property type="match status" value="1"/>
</dbReference>
<dbReference type="Pfam" id="PF06831">
    <property type="entry name" value="H2TH"/>
    <property type="match status" value="1"/>
</dbReference>
<dbReference type="SMART" id="SM00898">
    <property type="entry name" value="Fapy_DNA_glyco"/>
    <property type="match status" value="1"/>
</dbReference>
<dbReference type="SMART" id="SM01232">
    <property type="entry name" value="H2TH"/>
    <property type="match status" value="1"/>
</dbReference>
<dbReference type="SUPFAM" id="SSF57716">
    <property type="entry name" value="Glucocorticoid receptor-like (DNA-binding domain)"/>
    <property type="match status" value="1"/>
</dbReference>
<dbReference type="SUPFAM" id="SSF81624">
    <property type="entry name" value="N-terminal domain of MutM-like DNA repair proteins"/>
    <property type="match status" value="1"/>
</dbReference>
<dbReference type="SUPFAM" id="SSF46946">
    <property type="entry name" value="S13-like H2TH domain"/>
    <property type="match status" value="1"/>
</dbReference>
<dbReference type="PROSITE" id="PS51068">
    <property type="entry name" value="FPG_CAT"/>
    <property type="match status" value="1"/>
</dbReference>
<dbReference type="PROSITE" id="PS51066">
    <property type="entry name" value="ZF_FPG_2"/>
    <property type="match status" value="1"/>
</dbReference>
<accession>A5FZ95</accession>
<reference key="1">
    <citation type="submission" date="2007-05" db="EMBL/GenBank/DDBJ databases">
        <title>Complete sequence of chromosome of Acidiphilium cryptum JF-5.</title>
        <authorList>
            <consortium name="US DOE Joint Genome Institute"/>
            <person name="Copeland A."/>
            <person name="Lucas S."/>
            <person name="Lapidus A."/>
            <person name="Barry K."/>
            <person name="Detter J.C."/>
            <person name="Glavina del Rio T."/>
            <person name="Hammon N."/>
            <person name="Israni S."/>
            <person name="Dalin E."/>
            <person name="Tice H."/>
            <person name="Pitluck S."/>
            <person name="Sims D."/>
            <person name="Brettin T."/>
            <person name="Bruce D."/>
            <person name="Han C."/>
            <person name="Schmutz J."/>
            <person name="Larimer F."/>
            <person name="Land M."/>
            <person name="Hauser L."/>
            <person name="Kyrpides N."/>
            <person name="Kim E."/>
            <person name="Magnuson T."/>
            <person name="Richardson P."/>
        </authorList>
    </citation>
    <scope>NUCLEOTIDE SEQUENCE [LARGE SCALE GENOMIC DNA]</scope>
    <source>
        <strain>JF-5</strain>
    </source>
</reference>
<evidence type="ECO:0000250" key="1"/>
<evidence type="ECO:0000255" key="2">
    <source>
        <dbReference type="HAMAP-Rule" id="MF_00103"/>
    </source>
</evidence>
<proteinExistence type="inferred from homology"/>
<keyword id="KW-0227">DNA damage</keyword>
<keyword id="KW-0234">DNA repair</keyword>
<keyword id="KW-0238">DNA-binding</keyword>
<keyword id="KW-0326">Glycosidase</keyword>
<keyword id="KW-0378">Hydrolase</keyword>
<keyword id="KW-0456">Lyase</keyword>
<keyword id="KW-0479">Metal-binding</keyword>
<keyword id="KW-0511">Multifunctional enzyme</keyword>
<keyword id="KW-1185">Reference proteome</keyword>
<keyword id="KW-0862">Zinc</keyword>
<keyword id="KW-0863">Zinc-finger</keyword>
<comment type="function">
    <text evidence="2">Involved in base excision repair of DNA damaged by oxidation or by mutagenic agents. Acts as a DNA glycosylase that recognizes and removes damaged bases. Has a preference for oxidized purines, such as 7,8-dihydro-8-oxoguanine (8-oxoG). Has AP (apurinic/apyrimidinic) lyase activity and introduces nicks in the DNA strand. Cleaves the DNA backbone by beta-delta elimination to generate a single-strand break at the site of the removed base with both 3'- and 5'-phosphates.</text>
</comment>
<comment type="catalytic activity">
    <reaction evidence="2">
        <text>Hydrolysis of DNA containing ring-opened 7-methylguanine residues, releasing 2,6-diamino-4-hydroxy-5-(N-methyl)formamidopyrimidine.</text>
        <dbReference type="EC" id="3.2.2.23"/>
    </reaction>
</comment>
<comment type="catalytic activity">
    <reaction evidence="2">
        <text>2'-deoxyribonucleotide-(2'-deoxyribose 5'-phosphate)-2'-deoxyribonucleotide-DNA = a 3'-end 2'-deoxyribonucleotide-(2,3-dehydro-2,3-deoxyribose 5'-phosphate)-DNA + a 5'-end 5'-phospho-2'-deoxyribonucleoside-DNA + H(+)</text>
        <dbReference type="Rhea" id="RHEA:66592"/>
        <dbReference type="Rhea" id="RHEA-COMP:13180"/>
        <dbReference type="Rhea" id="RHEA-COMP:16897"/>
        <dbReference type="Rhea" id="RHEA-COMP:17067"/>
        <dbReference type="ChEBI" id="CHEBI:15378"/>
        <dbReference type="ChEBI" id="CHEBI:136412"/>
        <dbReference type="ChEBI" id="CHEBI:157695"/>
        <dbReference type="ChEBI" id="CHEBI:167181"/>
        <dbReference type="EC" id="4.2.99.18"/>
    </reaction>
</comment>
<comment type="cofactor">
    <cofactor evidence="2">
        <name>Zn(2+)</name>
        <dbReference type="ChEBI" id="CHEBI:29105"/>
    </cofactor>
    <text evidence="2">Binds 1 zinc ion per subunit.</text>
</comment>
<comment type="subunit">
    <text evidence="2">Monomer.</text>
</comment>
<comment type="similarity">
    <text evidence="2">Belongs to the FPG family.</text>
</comment>
<gene>
    <name evidence="2" type="primary">mutM</name>
    <name evidence="2" type="synonym">fpg</name>
    <name type="ordered locus">Acry_1723</name>
</gene>
<sequence>MPELPEVETVMRGLAAKLEGRRLARVVLARPDLRWPIPEGFVQFLSGARVEGFRRRGKYMFMRLDRALSVLIHLGMSGRMTIDSAPLPHQHLTLETDDGAVIGFVDPRRFGALDLVATAAEDSHRLIAGLGPEPLDDAFSPATLASALEGKKTPIKAALLDQSVVAGLGNIYVSEALFRAGILPHRLAGTIGRGRAGRLVPAIKATLTDAIAAGGSSLRDYVQPSGELGYFQHAWKVYDRAGQPCERCPGPAACAGISRTVQSGRATYFCARTQK</sequence>
<name>FPG_ACICJ</name>